<comment type="function">
    <text evidence="1">Required for accurate and efficient protein synthesis under certain stress conditions. May act as a fidelity factor of the translation reaction, by catalyzing a one-codon backward translocation of tRNAs on improperly translocated ribosomes. Back-translocation proceeds from a post-translocation (POST) complex to a pre-translocation (PRE) complex, thus giving elongation factor G a second chance to translocate the tRNAs correctly. Binds to ribosomes in a GTP-dependent manner.</text>
</comment>
<comment type="catalytic activity">
    <reaction evidence="1">
        <text>GTP + H2O = GDP + phosphate + H(+)</text>
        <dbReference type="Rhea" id="RHEA:19669"/>
        <dbReference type="ChEBI" id="CHEBI:15377"/>
        <dbReference type="ChEBI" id="CHEBI:15378"/>
        <dbReference type="ChEBI" id="CHEBI:37565"/>
        <dbReference type="ChEBI" id="CHEBI:43474"/>
        <dbReference type="ChEBI" id="CHEBI:58189"/>
        <dbReference type="EC" id="3.6.5.n1"/>
    </reaction>
</comment>
<comment type="subcellular location">
    <subcellularLocation>
        <location evidence="1">Cell inner membrane</location>
        <topology evidence="1">Peripheral membrane protein</topology>
        <orientation evidence="1">Cytoplasmic side</orientation>
    </subcellularLocation>
</comment>
<comment type="similarity">
    <text evidence="1">Belongs to the TRAFAC class translation factor GTPase superfamily. Classic translation factor GTPase family. LepA subfamily.</text>
</comment>
<proteinExistence type="evidence at protein level"/>
<reference key="1">
    <citation type="submission" date="2004-11" db="EMBL/GenBank/DDBJ databases">
        <title>Complete genome sequence of Thermus thermophilus HB8.</title>
        <authorList>
            <person name="Masui R."/>
            <person name="Kurokawa K."/>
            <person name="Nakagawa N."/>
            <person name="Tokunaga F."/>
            <person name="Koyama Y."/>
            <person name="Shibata T."/>
            <person name="Oshima T."/>
            <person name="Yokoyama S."/>
            <person name="Yasunaga T."/>
            <person name="Kuramitsu S."/>
        </authorList>
    </citation>
    <scope>NUCLEOTIDE SEQUENCE [LARGE SCALE GENOMIC DNA]</scope>
    <source>
        <strain>ATCC 27634 / DSM 579 / HB8</strain>
    </source>
</reference>
<organism>
    <name type="scientific">Thermus thermophilus (strain ATCC 27634 / DSM 579 / HB8)</name>
    <dbReference type="NCBI Taxonomy" id="300852"/>
    <lineage>
        <taxon>Bacteria</taxon>
        <taxon>Thermotogati</taxon>
        <taxon>Deinococcota</taxon>
        <taxon>Deinococci</taxon>
        <taxon>Thermales</taxon>
        <taxon>Thermaceae</taxon>
        <taxon>Thermus</taxon>
    </lineage>
</organism>
<sequence length="610" mass="67600">MVRMDLSRIRNFSIIAHVDHGKSTLADRILELTHAVSDREMREQFLDSLELERERGITIKASAVRVTYRAKDGEEYVFHLIDTPGHVDFTYEVSRALAAVEGVLLVVDASQGVEAETLAKFYMALEHGHVIIPVINKIDLPNARPLEVALEVEEVLGLPADEAIFASGKTGEGVEEILEAIVQRIPPPKGDPEAPLKALIFDSVYDAYQGVIPYLRLFEGRVRPGDRIRIYSTGKEFTVDKVGVFTPQGLVATEALEAGEVGWLVAAIRDIHDVQVGDTITLADRPTPSPYPGFRPAKPVVFAGLYPVDSGDYGKLRDALEKLKLNDAALTFEPESSTALGFGFRCGFLGLLHAEIVQERLEREFGLSLIATAPSVVYKVRLKSGEEVEVHNPADLPDPTRIEEILEPYVKLTIFTPEEYVGSLMQLLQEKRGRLVNMNYLPGAQKRVELVYEAPFAEILYDFHDRLKSVSRGYASMDYEQAGYRPGDLVKVNVLVHGEVVDALTFIAHREKAYTMARAIVDKLAEVIPRQLFEVPIQAAIGGKIIARATVKALRKDVLAKCYGGDVTRKKKLLEKQKEGKKRLKAIGKVEVPQEAFLAVLSAGRDEPKG</sequence>
<evidence type="ECO:0000255" key="1">
    <source>
        <dbReference type="HAMAP-Rule" id="MF_00071"/>
    </source>
</evidence>
<evidence type="ECO:0007829" key="2">
    <source>
        <dbReference type="PDB" id="4W2E"/>
    </source>
</evidence>
<name>LEPA_THET8</name>
<dbReference type="EC" id="3.6.5.n1" evidence="1"/>
<dbReference type="EMBL" id="AP008226">
    <property type="protein sequence ID" value="BAD70564.1"/>
    <property type="molecule type" value="Genomic_DNA"/>
</dbReference>
<dbReference type="RefSeq" id="WP_011228160.1">
    <property type="nucleotide sequence ID" value="NC_006461.1"/>
</dbReference>
<dbReference type="RefSeq" id="YP_144007.1">
    <property type="nucleotide sequence ID" value="NC_006461.1"/>
</dbReference>
<dbReference type="PDB" id="4W2E">
    <property type="method" value="X-ray"/>
    <property type="resolution" value="2.90 A"/>
    <property type="chains" value="y=6-610"/>
</dbReference>
<dbReference type="PDB" id="5IMQ">
    <property type="method" value="EM"/>
    <property type="resolution" value="3.80 A"/>
    <property type="chains" value="B=1-610"/>
</dbReference>
<dbReference type="PDB" id="5IMR">
    <property type="method" value="EM"/>
    <property type="chains" value="C=1-610"/>
</dbReference>
<dbReference type="PDB" id="5J8B">
    <property type="method" value="X-ray"/>
    <property type="resolution" value="2.60 A"/>
    <property type="chains" value="z=6-610"/>
</dbReference>
<dbReference type="PDBsum" id="4W2E"/>
<dbReference type="PDBsum" id="5IMQ"/>
<dbReference type="PDBsum" id="5IMR"/>
<dbReference type="PDBsum" id="5J8B"/>
<dbReference type="SMR" id="Q5SKA7"/>
<dbReference type="EnsemblBacteria" id="BAD70564">
    <property type="protein sequence ID" value="BAD70564"/>
    <property type="gene ID" value="BAD70564"/>
</dbReference>
<dbReference type="GeneID" id="3170109"/>
<dbReference type="KEGG" id="ttj:TTHA0741"/>
<dbReference type="PATRIC" id="fig|300852.9.peg.734"/>
<dbReference type="eggNOG" id="COG0481">
    <property type="taxonomic scope" value="Bacteria"/>
</dbReference>
<dbReference type="HOGENOM" id="CLU_009995_3_3_0"/>
<dbReference type="PhylomeDB" id="Q5SKA7"/>
<dbReference type="BRENDA" id="3.6.5.3">
    <property type="organism ID" value="2305"/>
</dbReference>
<dbReference type="Proteomes" id="UP000000532">
    <property type="component" value="Chromosome"/>
</dbReference>
<dbReference type="GO" id="GO:0005886">
    <property type="term" value="C:plasma membrane"/>
    <property type="evidence" value="ECO:0007669"/>
    <property type="project" value="UniProtKB-SubCell"/>
</dbReference>
<dbReference type="GO" id="GO:0005525">
    <property type="term" value="F:GTP binding"/>
    <property type="evidence" value="ECO:0007669"/>
    <property type="project" value="UniProtKB-UniRule"/>
</dbReference>
<dbReference type="GO" id="GO:0003924">
    <property type="term" value="F:GTPase activity"/>
    <property type="evidence" value="ECO:0007669"/>
    <property type="project" value="UniProtKB-UniRule"/>
</dbReference>
<dbReference type="GO" id="GO:0043022">
    <property type="term" value="F:ribosome binding"/>
    <property type="evidence" value="ECO:0007669"/>
    <property type="project" value="UniProtKB-UniRule"/>
</dbReference>
<dbReference type="GO" id="GO:0003746">
    <property type="term" value="F:translation elongation factor activity"/>
    <property type="evidence" value="ECO:0007669"/>
    <property type="project" value="UniProtKB-UniRule"/>
</dbReference>
<dbReference type="GO" id="GO:0045727">
    <property type="term" value="P:positive regulation of translation"/>
    <property type="evidence" value="ECO:0007669"/>
    <property type="project" value="UniProtKB-UniRule"/>
</dbReference>
<dbReference type="CDD" id="cd03699">
    <property type="entry name" value="EF4_II"/>
    <property type="match status" value="1"/>
</dbReference>
<dbReference type="CDD" id="cd16260">
    <property type="entry name" value="EF4_III"/>
    <property type="match status" value="1"/>
</dbReference>
<dbReference type="CDD" id="cd01890">
    <property type="entry name" value="LepA"/>
    <property type="match status" value="1"/>
</dbReference>
<dbReference type="CDD" id="cd03709">
    <property type="entry name" value="lepA_C"/>
    <property type="match status" value="1"/>
</dbReference>
<dbReference type="FunFam" id="3.40.50.300:FF:000078">
    <property type="entry name" value="Elongation factor 4"/>
    <property type="match status" value="1"/>
</dbReference>
<dbReference type="FunFam" id="2.40.30.10:FF:000015">
    <property type="entry name" value="Translation factor GUF1, mitochondrial"/>
    <property type="match status" value="1"/>
</dbReference>
<dbReference type="FunFam" id="3.30.70.240:FF:000007">
    <property type="entry name" value="Translation factor GUF1, mitochondrial"/>
    <property type="match status" value="1"/>
</dbReference>
<dbReference type="FunFam" id="3.30.70.2570:FF:000001">
    <property type="entry name" value="Translation factor GUF1, mitochondrial"/>
    <property type="match status" value="1"/>
</dbReference>
<dbReference type="FunFam" id="3.30.70.870:FF:000004">
    <property type="entry name" value="Translation factor GUF1, mitochondrial"/>
    <property type="match status" value="1"/>
</dbReference>
<dbReference type="Gene3D" id="3.30.70.240">
    <property type="match status" value="1"/>
</dbReference>
<dbReference type="Gene3D" id="3.30.70.2570">
    <property type="entry name" value="Elongation factor 4, C-terminal domain"/>
    <property type="match status" value="1"/>
</dbReference>
<dbReference type="Gene3D" id="3.30.70.870">
    <property type="entry name" value="Elongation Factor G (Translational Gtpase), domain 3"/>
    <property type="match status" value="1"/>
</dbReference>
<dbReference type="Gene3D" id="3.40.50.300">
    <property type="entry name" value="P-loop containing nucleotide triphosphate hydrolases"/>
    <property type="match status" value="1"/>
</dbReference>
<dbReference type="Gene3D" id="2.40.30.10">
    <property type="entry name" value="Translation factors"/>
    <property type="match status" value="1"/>
</dbReference>
<dbReference type="HAMAP" id="MF_00071">
    <property type="entry name" value="LepA"/>
    <property type="match status" value="1"/>
</dbReference>
<dbReference type="InterPro" id="IPR006297">
    <property type="entry name" value="EF-4"/>
</dbReference>
<dbReference type="InterPro" id="IPR035647">
    <property type="entry name" value="EFG_III/V"/>
</dbReference>
<dbReference type="InterPro" id="IPR000640">
    <property type="entry name" value="EFG_V-like"/>
</dbReference>
<dbReference type="InterPro" id="IPR004161">
    <property type="entry name" value="EFTu-like_2"/>
</dbReference>
<dbReference type="InterPro" id="IPR031157">
    <property type="entry name" value="G_TR_CS"/>
</dbReference>
<dbReference type="InterPro" id="IPR038363">
    <property type="entry name" value="LepA_C_sf"/>
</dbReference>
<dbReference type="InterPro" id="IPR013842">
    <property type="entry name" value="LepA_CTD"/>
</dbReference>
<dbReference type="InterPro" id="IPR035654">
    <property type="entry name" value="LepA_IV"/>
</dbReference>
<dbReference type="InterPro" id="IPR027417">
    <property type="entry name" value="P-loop_NTPase"/>
</dbReference>
<dbReference type="InterPro" id="IPR005225">
    <property type="entry name" value="Small_GTP-bd"/>
</dbReference>
<dbReference type="InterPro" id="IPR000795">
    <property type="entry name" value="T_Tr_GTP-bd_dom"/>
</dbReference>
<dbReference type="InterPro" id="IPR009000">
    <property type="entry name" value="Transl_B-barrel_sf"/>
</dbReference>
<dbReference type="NCBIfam" id="TIGR01393">
    <property type="entry name" value="lepA"/>
    <property type="match status" value="1"/>
</dbReference>
<dbReference type="NCBIfam" id="TIGR00231">
    <property type="entry name" value="small_GTP"/>
    <property type="match status" value="1"/>
</dbReference>
<dbReference type="PANTHER" id="PTHR43512:SF4">
    <property type="entry name" value="TRANSLATION FACTOR GUF1 HOMOLOG, CHLOROPLASTIC"/>
    <property type="match status" value="1"/>
</dbReference>
<dbReference type="PANTHER" id="PTHR43512">
    <property type="entry name" value="TRANSLATION FACTOR GUF1-RELATED"/>
    <property type="match status" value="1"/>
</dbReference>
<dbReference type="Pfam" id="PF00679">
    <property type="entry name" value="EFG_C"/>
    <property type="match status" value="1"/>
</dbReference>
<dbReference type="Pfam" id="PF00009">
    <property type="entry name" value="GTP_EFTU"/>
    <property type="match status" value="1"/>
</dbReference>
<dbReference type="Pfam" id="PF03144">
    <property type="entry name" value="GTP_EFTU_D2"/>
    <property type="match status" value="1"/>
</dbReference>
<dbReference type="Pfam" id="PF06421">
    <property type="entry name" value="LepA_C"/>
    <property type="match status" value="1"/>
</dbReference>
<dbReference type="PRINTS" id="PR00315">
    <property type="entry name" value="ELONGATNFCT"/>
</dbReference>
<dbReference type="SMART" id="SM00838">
    <property type="entry name" value="EFG_C"/>
    <property type="match status" value="1"/>
</dbReference>
<dbReference type="SUPFAM" id="SSF54980">
    <property type="entry name" value="EF-G C-terminal domain-like"/>
    <property type="match status" value="2"/>
</dbReference>
<dbReference type="SUPFAM" id="SSF52540">
    <property type="entry name" value="P-loop containing nucleoside triphosphate hydrolases"/>
    <property type="match status" value="1"/>
</dbReference>
<dbReference type="SUPFAM" id="SSF50447">
    <property type="entry name" value="Translation proteins"/>
    <property type="match status" value="1"/>
</dbReference>
<dbReference type="PROSITE" id="PS00301">
    <property type="entry name" value="G_TR_1"/>
    <property type="match status" value="1"/>
</dbReference>
<dbReference type="PROSITE" id="PS51722">
    <property type="entry name" value="G_TR_2"/>
    <property type="match status" value="1"/>
</dbReference>
<gene>
    <name evidence="1" type="primary">lepA</name>
    <name type="ordered locus">TTHA0741</name>
</gene>
<keyword id="KW-0002">3D-structure</keyword>
<keyword id="KW-0997">Cell inner membrane</keyword>
<keyword id="KW-1003">Cell membrane</keyword>
<keyword id="KW-0342">GTP-binding</keyword>
<keyword id="KW-0378">Hydrolase</keyword>
<keyword id="KW-0472">Membrane</keyword>
<keyword id="KW-0547">Nucleotide-binding</keyword>
<keyword id="KW-0648">Protein biosynthesis</keyword>
<keyword id="KW-1185">Reference proteome</keyword>
<protein>
    <recommendedName>
        <fullName evidence="1">Elongation factor 4</fullName>
        <shortName evidence="1">EF-4</shortName>
        <ecNumber evidence="1">3.6.5.n1</ecNumber>
    </recommendedName>
    <alternativeName>
        <fullName evidence="1">Ribosomal back-translocase LepA</fullName>
    </alternativeName>
</protein>
<feature type="chain" id="PRO_0000224806" description="Elongation factor 4">
    <location>
        <begin position="1"/>
        <end position="610"/>
    </location>
</feature>
<feature type="domain" description="tr-type G">
    <location>
        <begin position="7"/>
        <end position="189"/>
    </location>
</feature>
<feature type="binding site" evidence="1">
    <location>
        <begin position="19"/>
        <end position="24"/>
    </location>
    <ligand>
        <name>GTP</name>
        <dbReference type="ChEBI" id="CHEBI:37565"/>
    </ligand>
</feature>
<feature type="binding site" evidence="1">
    <location>
        <begin position="136"/>
        <end position="139"/>
    </location>
    <ligand>
        <name>GTP</name>
        <dbReference type="ChEBI" id="CHEBI:37565"/>
    </ligand>
</feature>
<feature type="strand" evidence="2">
    <location>
        <begin position="6"/>
        <end position="8"/>
    </location>
</feature>
<feature type="helix" evidence="2">
    <location>
        <begin position="22"/>
        <end position="33"/>
    </location>
</feature>
<feature type="strand" evidence="2">
    <location>
        <begin position="64"/>
        <end position="68"/>
    </location>
</feature>
<feature type="strand" evidence="2">
    <location>
        <begin position="76"/>
        <end position="80"/>
    </location>
</feature>
<feature type="turn" evidence="2">
    <location>
        <begin position="91"/>
        <end position="95"/>
    </location>
</feature>
<feature type="helix" evidence="2">
    <location>
        <begin position="96"/>
        <end position="99"/>
    </location>
</feature>
<feature type="strand" evidence="2">
    <location>
        <begin position="101"/>
        <end position="105"/>
    </location>
</feature>
<feature type="strand" evidence="2">
    <location>
        <begin position="108"/>
        <end position="111"/>
    </location>
</feature>
<feature type="helix" evidence="2">
    <location>
        <begin position="115"/>
        <end position="127"/>
    </location>
</feature>
<feature type="strand" evidence="2">
    <location>
        <begin position="130"/>
        <end position="132"/>
    </location>
</feature>
<feature type="strand" evidence="2">
    <location>
        <begin position="140"/>
        <end position="142"/>
    </location>
</feature>
<feature type="helix" evidence="2">
    <location>
        <begin position="146"/>
        <end position="156"/>
    </location>
</feature>
<feature type="turn" evidence="2">
    <location>
        <begin position="160"/>
        <end position="162"/>
    </location>
</feature>
<feature type="strand" evidence="2">
    <location>
        <begin position="168"/>
        <end position="171"/>
    </location>
</feature>
<feature type="helix" evidence="2">
    <location>
        <begin position="173"/>
        <end position="176"/>
    </location>
</feature>
<feature type="helix" evidence="2">
    <location>
        <begin position="177"/>
        <end position="184"/>
    </location>
</feature>
<feature type="strand" evidence="2">
    <location>
        <begin position="192"/>
        <end position="195"/>
    </location>
</feature>
<feature type="strand" evidence="2">
    <location>
        <begin position="197"/>
        <end position="199"/>
    </location>
</feature>
<feature type="strand" evidence="2">
    <location>
        <begin position="216"/>
        <end position="222"/>
    </location>
</feature>
<feature type="turn" evidence="2">
    <location>
        <begin position="231"/>
        <end position="233"/>
    </location>
</feature>
<feature type="strand" evidence="2">
    <location>
        <begin position="254"/>
        <end position="257"/>
    </location>
</feature>
<feature type="strand" evidence="2">
    <location>
        <begin position="283"/>
        <end position="285"/>
    </location>
</feature>
<feature type="helix" evidence="2">
    <location>
        <begin position="313"/>
        <end position="326"/>
    </location>
</feature>
<feature type="strand" evidence="2">
    <location>
        <begin position="340"/>
        <end position="342"/>
    </location>
</feature>
<feature type="helix" evidence="2">
    <location>
        <begin position="351"/>
        <end position="365"/>
    </location>
</feature>
<feature type="strand" evidence="2">
    <location>
        <begin position="383"/>
        <end position="385"/>
    </location>
</feature>
<feature type="helix" evidence="2">
    <location>
        <begin position="393"/>
        <end position="395"/>
    </location>
</feature>
<feature type="strand" evidence="2">
    <location>
        <begin position="410"/>
        <end position="413"/>
    </location>
</feature>
<feature type="helix" evidence="2">
    <location>
        <begin position="421"/>
        <end position="430"/>
    </location>
</feature>
<feature type="strand" evidence="2">
    <location>
        <begin position="434"/>
        <end position="437"/>
    </location>
</feature>
<feature type="strand" evidence="2">
    <location>
        <begin position="442"/>
        <end position="444"/>
    </location>
</feature>
<feature type="strand" evidence="2">
    <location>
        <begin position="451"/>
        <end position="454"/>
    </location>
</feature>
<feature type="helix" evidence="2">
    <location>
        <begin position="456"/>
        <end position="471"/>
    </location>
</feature>
<feature type="strand" evidence="2">
    <location>
        <begin position="490"/>
        <end position="496"/>
    </location>
</feature>
<feature type="strand" evidence="2">
    <location>
        <begin position="501"/>
        <end position="508"/>
    </location>
</feature>
<feature type="helix" evidence="2">
    <location>
        <begin position="510"/>
        <end position="524"/>
    </location>
</feature>
<feature type="turn" evidence="2">
    <location>
        <begin position="525"/>
        <end position="527"/>
    </location>
</feature>
<feature type="strand" evidence="2">
    <location>
        <begin position="535"/>
        <end position="541"/>
    </location>
</feature>
<feature type="strand" evidence="2">
    <location>
        <begin position="544"/>
        <end position="551"/>
    </location>
</feature>
<feature type="turn" evidence="2">
    <location>
        <begin position="558"/>
        <end position="561"/>
    </location>
</feature>
<feature type="helix" evidence="2">
    <location>
        <begin position="567"/>
        <end position="586"/>
    </location>
</feature>
<feature type="turn" evidence="2">
    <location>
        <begin position="596"/>
        <end position="601"/>
    </location>
</feature>
<accession>Q5SKA7</accession>